<name>GATC_MARMM</name>
<accession>Q0ANY8</accession>
<evidence type="ECO:0000255" key="1">
    <source>
        <dbReference type="HAMAP-Rule" id="MF_00122"/>
    </source>
</evidence>
<sequence>MSVTADDVRRIARLARIAEPTDRIDTLVGELNGILSWIEQLNEVDVDGVEPMTTPVKFPLPQRADEVTDGNCRDKVLANAPKSDEGFFVVPKSVE</sequence>
<organism>
    <name type="scientific">Maricaulis maris (strain MCS10)</name>
    <name type="common">Caulobacter maris</name>
    <dbReference type="NCBI Taxonomy" id="394221"/>
    <lineage>
        <taxon>Bacteria</taxon>
        <taxon>Pseudomonadati</taxon>
        <taxon>Pseudomonadota</taxon>
        <taxon>Alphaproteobacteria</taxon>
        <taxon>Maricaulales</taxon>
        <taxon>Maricaulaceae</taxon>
        <taxon>Maricaulis</taxon>
    </lineage>
</organism>
<keyword id="KW-0067">ATP-binding</keyword>
<keyword id="KW-0436">Ligase</keyword>
<keyword id="KW-0547">Nucleotide-binding</keyword>
<keyword id="KW-0648">Protein biosynthesis</keyword>
<keyword id="KW-1185">Reference proteome</keyword>
<dbReference type="EC" id="6.3.5.-" evidence="1"/>
<dbReference type="EMBL" id="CP000449">
    <property type="protein sequence ID" value="ABI65999.1"/>
    <property type="molecule type" value="Genomic_DNA"/>
</dbReference>
<dbReference type="RefSeq" id="WP_011643645.1">
    <property type="nucleotide sequence ID" value="NC_008347.1"/>
</dbReference>
<dbReference type="SMR" id="Q0ANY8"/>
<dbReference type="STRING" id="394221.Mmar10_1707"/>
<dbReference type="KEGG" id="mmr:Mmar10_1707"/>
<dbReference type="eggNOG" id="COG0721">
    <property type="taxonomic scope" value="Bacteria"/>
</dbReference>
<dbReference type="HOGENOM" id="CLU_105899_2_0_5"/>
<dbReference type="OrthoDB" id="9794326at2"/>
<dbReference type="Proteomes" id="UP000001964">
    <property type="component" value="Chromosome"/>
</dbReference>
<dbReference type="GO" id="GO:0050566">
    <property type="term" value="F:asparaginyl-tRNA synthase (glutamine-hydrolyzing) activity"/>
    <property type="evidence" value="ECO:0007669"/>
    <property type="project" value="RHEA"/>
</dbReference>
<dbReference type="GO" id="GO:0005524">
    <property type="term" value="F:ATP binding"/>
    <property type="evidence" value="ECO:0007669"/>
    <property type="project" value="UniProtKB-KW"/>
</dbReference>
<dbReference type="GO" id="GO:0050567">
    <property type="term" value="F:glutaminyl-tRNA synthase (glutamine-hydrolyzing) activity"/>
    <property type="evidence" value="ECO:0007669"/>
    <property type="project" value="UniProtKB-UniRule"/>
</dbReference>
<dbReference type="GO" id="GO:0070681">
    <property type="term" value="P:glutaminyl-tRNAGln biosynthesis via transamidation"/>
    <property type="evidence" value="ECO:0007669"/>
    <property type="project" value="TreeGrafter"/>
</dbReference>
<dbReference type="GO" id="GO:0006450">
    <property type="term" value="P:regulation of translational fidelity"/>
    <property type="evidence" value="ECO:0007669"/>
    <property type="project" value="InterPro"/>
</dbReference>
<dbReference type="GO" id="GO:0006412">
    <property type="term" value="P:translation"/>
    <property type="evidence" value="ECO:0007669"/>
    <property type="project" value="UniProtKB-UniRule"/>
</dbReference>
<dbReference type="Gene3D" id="1.10.20.60">
    <property type="entry name" value="Glu-tRNAGln amidotransferase C subunit, N-terminal domain"/>
    <property type="match status" value="1"/>
</dbReference>
<dbReference type="HAMAP" id="MF_00122">
    <property type="entry name" value="GatC"/>
    <property type="match status" value="1"/>
</dbReference>
<dbReference type="InterPro" id="IPR036113">
    <property type="entry name" value="Asp/Glu-ADT_sf_sub_c"/>
</dbReference>
<dbReference type="InterPro" id="IPR003837">
    <property type="entry name" value="GatC"/>
</dbReference>
<dbReference type="NCBIfam" id="TIGR00135">
    <property type="entry name" value="gatC"/>
    <property type="match status" value="1"/>
</dbReference>
<dbReference type="PANTHER" id="PTHR15004">
    <property type="entry name" value="GLUTAMYL-TRNA(GLN) AMIDOTRANSFERASE SUBUNIT C, MITOCHONDRIAL"/>
    <property type="match status" value="1"/>
</dbReference>
<dbReference type="PANTHER" id="PTHR15004:SF0">
    <property type="entry name" value="GLUTAMYL-TRNA(GLN) AMIDOTRANSFERASE SUBUNIT C, MITOCHONDRIAL"/>
    <property type="match status" value="1"/>
</dbReference>
<dbReference type="Pfam" id="PF02686">
    <property type="entry name" value="GatC"/>
    <property type="match status" value="1"/>
</dbReference>
<dbReference type="SUPFAM" id="SSF141000">
    <property type="entry name" value="Glu-tRNAGln amidotransferase C subunit"/>
    <property type="match status" value="1"/>
</dbReference>
<proteinExistence type="inferred from homology"/>
<feature type="chain" id="PRO_1000016143" description="Aspartyl/glutamyl-tRNA(Asn/Gln) amidotransferase subunit C">
    <location>
        <begin position="1"/>
        <end position="95"/>
    </location>
</feature>
<gene>
    <name evidence="1" type="primary">gatC</name>
    <name type="ordered locus">Mmar10_1707</name>
</gene>
<reference key="1">
    <citation type="submission" date="2006-08" db="EMBL/GenBank/DDBJ databases">
        <title>Complete sequence of Maricaulis maris MCS10.</title>
        <authorList>
            <consortium name="US DOE Joint Genome Institute"/>
            <person name="Copeland A."/>
            <person name="Lucas S."/>
            <person name="Lapidus A."/>
            <person name="Barry K."/>
            <person name="Detter J.C."/>
            <person name="Glavina del Rio T."/>
            <person name="Hammon N."/>
            <person name="Israni S."/>
            <person name="Dalin E."/>
            <person name="Tice H."/>
            <person name="Pitluck S."/>
            <person name="Saunders E."/>
            <person name="Brettin T."/>
            <person name="Bruce D."/>
            <person name="Han C."/>
            <person name="Tapia R."/>
            <person name="Gilna P."/>
            <person name="Schmutz J."/>
            <person name="Larimer F."/>
            <person name="Land M."/>
            <person name="Hauser L."/>
            <person name="Kyrpides N."/>
            <person name="Mikhailova N."/>
            <person name="Viollier P."/>
            <person name="Stephens C."/>
            <person name="Richardson P."/>
        </authorList>
    </citation>
    <scope>NUCLEOTIDE SEQUENCE [LARGE SCALE GENOMIC DNA]</scope>
    <source>
        <strain>MCS10</strain>
    </source>
</reference>
<comment type="function">
    <text evidence="1">Allows the formation of correctly charged Asn-tRNA(Asn) or Gln-tRNA(Gln) through the transamidation of misacylated Asp-tRNA(Asn) or Glu-tRNA(Gln) in organisms which lack either or both of asparaginyl-tRNA or glutaminyl-tRNA synthetases. The reaction takes place in the presence of glutamine and ATP through an activated phospho-Asp-tRNA(Asn) or phospho-Glu-tRNA(Gln).</text>
</comment>
<comment type="catalytic activity">
    <reaction evidence="1">
        <text>L-glutamyl-tRNA(Gln) + L-glutamine + ATP + H2O = L-glutaminyl-tRNA(Gln) + L-glutamate + ADP + phosphate + H(+)</text>
        <dbReference type="Rhea" id="RHEA:17521"/>
        <dbReference type="Rhea" id="RHEA-COMP:9681"/>
        <dbReference type="Rhea" id="RHEA-COMP:9684"/>
        <dbReference type="ChEBI" id="CHEBI:15377"/>
        <dbReference type="ChEBI" id="CHEBI:15378"/>
        <dbReference type="ChEBI" id="CHEBI:29985"/>
        <dbReference type="ChEBI" id="CHEBI:30616"/>
        <dbReference type="ChEBI" id="CHEBI:43474"/>
        <dbReference type="ChEBI" id="CHEBI:58359"/>
        <dbReference type="ChEBI" id="CHEBI:78520"/>
        <dbReference type="ChEBI" id="CHEBI:78521"/>
        <dbReference type="ChEBI" id="CHEBI:456216"/>
    </reaction>
</comment>
<comment type="catalytic activity">
    <reaction evidence="1">
        <text>L-aspartyl-tRNA(Asn) + L-glutamine + ATP + H2O = L-asparaginyl-tRNA(Asn) + L-glutamate + ADP + phosphate + 2 H(+)</text>
        <dbReference type="Rhea" id="RHEA:14513"/>
        <dbReference type="Rhea" id="RHEA-COMP:9674"/>
        <dbReference type="Rhea" id="RHEA-COMP:9677"/>
        <dbReference type="ChEBI" id="CHEBI:15377"/>
        <dbReference type="ChEBI" id="CHEBI:15378"/>
        <dbReference type="ChEBI" id="CHEBI:29985"/>
        <dbReference type="ChEBI" id="CHEBI:30616"/>
        <dbReference type="ChEBI" id="CHEBI:43474"/>
        <dbReference type="ChEBI" id="CHEBI:58359"/>
        <dbReference type="ChEBI" id="CHEBI:78515"/>
        <dbReference type="ChEBI" id="CHEBI:78516"/>
        <dbReference type="ChEBI" id="CHEBI:456216"/>
    </reaction>
</comment>
<comment type="subunit">
    <text evidence="1">Heterotrimer of A, B and C subunits.</text>
</comment>
<comment type="similarity">
    <text evidence="1">Belongs to the GatC family.</text>
</comment>
<protein>
    <recommendedName>
        <fullName evidence="1">Aspartyl/glutamyl-tRNA(Asn/Gln) amidotransferase subunit C</fullName>
        <shortName evidence="1">Asp/Glu-ADT subunit C</shortName>
        <ecNumber evidence="1">6.3.5.-</ecNumber>
    </recommendedName>
</protein>